<feature type="chain" id="PRO_1000140098" description="Probable L-ascorbate-6-phosphate lactonase UlaG">
    <location>
        <begin position="1"/>
        <end position="354"/>
    </location>
</feature>
<sequence>MSKVKSITRESWILSTFPEWGSWLNEEIEQEQVAPGTFAMWWLGCTGIWLKSEGGTNVCVDFWCGTGKQSHGNPLMKQGHQMQRMAGVKKLQPNLRTTPFVLDPFAIRQIDAVLATHDHNDHIDVNVAAAVMQNCADDVPFIGPKTCVDLWIGWGVPKERCIVVKPGDVVKVKDIEIHALDAFDRTALITLPADQKAAGVLPDGMDDRAVNYLFKTPGGTLYHSGDSHYSNYYAKHGNEHQIDVALGSYGENPRGITDKMTSADILRMGEALNAKVVIPFHHDIWSNFQADPQEIRVLWEMKKDRLKYGFKPFIWQVGGKFTWPLDKDNFEYHYPRGFDDCFTIEPDLPFKSFL</sequence>
<gene>
    <name evidence="1" type="primary">ulaG</name>
    <name type="ordered locus">EcSMS35_4663</name>
</gene>
<organism>
    <name type="scientific">Escherichia coli (strain SMS-3-5 / SECEC)</name>
    <dbReference type="NCBI Taxonomy" id="439855"/>
    <lineage>
        <taxon>Bacteria</taxon>
        <taxon>Pseudomonadati</taxon>
        <taxon>Pseudomonadota</taxon>
        <taxon>Gammaproteobacteria</taxon>
        <taxon>Enterobacterales</taxon>
        <taxon>Enterobacteriaceae</taxon>
        <taxon>Escherichia</taxon>
    </lineage>
</organism>
<keyword id="KW-0963">Cytoplasm</keyword>
<keyword id="KW-0378">Hydrolase</keyword>
<accession>B1LQL2</accession>
<evidence type="ECO:0000255" key="1">
    <source>
        <dbReference type="HAMAP-Rule" id="MF_01266"/>
    </source>
</evidence>
<name>ULAG_ECOSM</name>
<proteinExistence type="inferred from homology"/>
<comment type="function">
    <text evidence="1">Probably catalyzes the hydrolysis of L-ascorbate-6-P into 3-keto-L-gulonate-6-P. Is essential for L-ascorbate utilization under anaerobic conditions.</text>
</comment>
<comment type="catalytic activity">
    <reaction evidence="1">
        <text>L-ascorbate 6-phosphate + H2O = 3-dehydro-L-gulonate 6-phosphate</text>
        <dbReference type="Rhea" id="RHEA:28803"/>
        <dbReference type="ChEBI" id="CHEBI:15377"/>
        <dbReference type="ChEBI" id="CHEBI:58774"/>
        <dbReference type="ChEBI" id="CHEBI:61698"/>
    </reaction>
</comment>
<comment type="cofactor">
    <cofactor evidence="1">
        <name>a divalent metal cation</name>
        <dbReference type="ChEBI" id="CHEBI:60240"/>
    </cofactor>
</comment>
<comment type="pathway">
    <text evidence="1">Cofactor degradation; L-ascorbate degradation; D-xylulose 5-phosphate from L-ascorbate: step 1/4.</text>
</comment>
<comment type="subcellular location">
    <subcellularLocation>
        <location evidence="1">Cytoplasm</location>
    </subcellularLocation>
</comment>
<comment type="induction">
    <text evidence="1">Induced by L-ascorbate. Repressed by UlaR.</text>
</comment>
<comment type="similarity">
    <text evidence="1">Belongs to the UlaG family.</text>
</comment>
<dbReference type="EC" id="3.1.1.-" evidence="1"/>
<dbReference type="EMBL" id="CP000970">
    <property type="protein sequence ID" value="ACB18748.1"/>
    <property type="molecule type" value="Genomic_DNA"/>
</dbReference>
<dbReference type="RefSeq" id="WP_012311879.1">
    <property type="nucleotide sequence ID" value="NC_010498.1"/>
</dbReference>
<dbReference type="SMR" id="B1LQL2"/>
<dbReference type="KEGG" id="ecm:EcSMS35_4663"/>
<dbReference type="HOGENOM" id="CLU_074775_0_0_6"/>
<dbReference type="UniPathway" id="UPA00263">
    <property type="reaction ID" value="UER00377"/>
</dbReference>
<dbReference type="Proteomes" id="UP000007011">
    <property type="component" value="Chromosome"/>
</dbReference>
<dbReference type="GO" id="GO:0005737">
    <property type="term" value="C:cytoplasm"/>
    <property type="evidence" value="ECO:0007669"/>
    <property type="project" value="UniProtKB-SubCell"/>
</dbReference>
<dbReference type="GO" id="GO:0035460">
    <property type="term" value="F:L-ascorbate 6-phosphate lactonase activity"/>
    <property type="evidence" value="ECO:0007669"/>
    <property type="project" value="InterPro"/>
</dbReference>
<dbReference type="GO" id="GO:0030145">
    <property type="term" value="F:manganese ion binding"/>
    <property type="evidence" value="ECO:0007669"/>
    <property type="project" value="InterPro"/>
</dbReference>
<dbReference type="GO" id="GO:0019854">
    <property type="term" value="P:L-ascorbic acid catabolic process"/>
    <property type="evidence" value="ECO:0007669"/>
    <property type="project" value="UniProtKB-UniRule"/>
</dbReference>
<dbReference type="CDD" id="cd16284">
    <property type="entry name" value="UlaG-like_MBL-fold"/>
    <property type="match status" value="1"/>
</dbReference>
<dbReference type="FunFam" id="3.60.15.10:FF:000004">
    <property type="entry name" value="Probable L-ascorbate-6-phosphate lactonase UlaG"/>
    <property type="match status" value="1"/>
</dbReference>
<dbReference type="Gene3D" id="3.60.15.10">
    <property type="entry name" value="Ribonuclease Z/Hydroxyacylglutathione hydrolase-like"/>
    <property type="match status" value="1"/>
</dbReference>
<dbReference type="HAMAP" id="MF_01266">
    <property type="entry name" value="UlaG"/>
    <property type="match status" value="1"/>
</dbReference>
<dbReference type="InterPro" id="IPR023951">
    <property type="entry name" value="L-ascorbate_6P_UlaG"/>
</dbReference>
<dbReference type="InterPro" id="IPR001279">
    <property type="entry name" value="Metallo-B-lactamas"/>
</dbReference>
<dbReference type="InterPro" id="IPR036866">
    <property type="entry name" value="RibonucZ/Hydroxyglut_hydro"/>
</dbReference>
<dbReference type="InterPro" id="IPR048021">
    <property type="entry name" value="UlaG-like_MBL-fold"/>
</dbReference>
<dbReference type="InterPro" id="IPR050114">
    <property type="entry name" value="UPF0173_UPF0282_UlaG_hydrolase"/>
</dbReference>
<dbReference type="NCBIfam" id="NF008688">
    <property type="entry name" value="PRK11709.1"/>
    <property type="match status" value="1"/>
</dbReference>
<dbReference type="PANTHER" id="PTHR43546:SF9">
    <property type="entry name" value="L-ASCORBATE-6-PHOSPHATE LACTONASE ULAG-RELATED"/>
    <property type="match status" value="1"/>
</dbReference>
<dbReference type="PANTHER" id="PTHR43546">
    <property type="entry name" value="UPF0173 METAL-DEPENDENT HYDROLASE MJ1163-RELATED"/>
    <property type="match status" value="1"/>
</dbReference>
<dbReference type="Pfam" id="PF12706">
    <property type="entry name" value="Lactamase_B_2"/>
    <property type="match status" value="1"/>
</dbReference>
<dbReference type="SUPFAM" id="SSF56281">
    <property type="entry name" value="Metallo-hydrolase/oxidoreductase"/>
    <property type="match status" value="1"/>
</dbReference>
<protein>
    <recommendedName>
        <fullName evidence="1">Probable L-ascorbate-6-phosphate lactonase UlaG</fullName>
        <ecNumber evidence="1">3.1.1.-</ecNumber>
    </recommendedName>
    <alternativeName>
        <fullName evidence="1">L-ascorbate utilization protein G</fullName>
    </alternativeName>
</protein>
<reference key="1">
    <citation type="journal article" date="2008" name="J. Bacteriol.">
        <title>Insights into the environmental resistance gene pool from the genome sequence of the multidrug-resistant environmental isolate Escherichia coli SMS-3-5.</title>
        <authorList>
            <person name="Fricke W.F."/>
            <person name="Wright M.S."/>
            <person name="Lindell A.H."/>
            <person name="Harkins D.M."/>
            <person name="Baker-Austin C."/>
            <person name="Ravel J."/>
            <person name="Stepanauskas R."/>
        </authorList>
    </citation>
    <scope>NUCLEOTIDE SEQUENCE [LARGE SCALE GENOMIC DNA]</scope>
    <source>
        <strain>SMS-3-5 / SECEC</strain>
    </source>
</reference>